<reference key="1">
    <citation type="journal article" date="2002" name="Science">
        <title>The genome sequence of the malaria mosquito Anopheles gambiae.</title>
        <authorList>
            <person name="Holt R.A."/>
            <person name="Subramanian G.M."/>
            <person name="Halpern A."/>
            <person name="Sutton G.G."/>
            <person name="Charlab R."/>
            <person name="Nusskern D.R."/>
            <person name="Wincker P."/>
            <person name="Clark A.G."/>
            <person name="Ribeiro J.M.C."/>
            <person name="Wides R."/>
            <person name="Salzberg S.L."/>
            <person name="Loftus B.J."/>
            <person name="Yandell M.D."/>
            <person name="Majoros W.H."/>
            <person name="Rusch D.B."/>
            <person name="Lai Z."/>
            <person name="Kraft C.L."/>
            <person name="Abril J.F."/>
            <person name="Anthouard V."/>
            <person name="Arensburger P."/>
            <person name="Atkinson P.W."/>
            <person name="Baden H."/>
            <person name="de Berardinis V."/>
            <person name="Baldwin D."/>
            <person name="Benes V."/>
            <person name="Biedler J."/>
            <person name="Blass C."/>
            <person name="Bolanos R."/>
            <person name="Boscus D."/>
            <person name="Barnstead M."/>
            <person name="Cai S."/>
            <person name="Center A."/>
            <person name="Chaturverdi K."/>
            <person name="Christophides G.K."/>
            <person name="Chrystal M.A.M."/>
            <person name="Clamp M."/>
            <person name="Cravchik A."/>
            <person name="Curwen V."/>
            <person name="Dana A."/>
            <person name="Delcher A."/>
            <person name="Dew I."/>
            <person name="Evans C.A."/>
            <person name="Flanigan M."/>
            <person name="Grundschober-Freimoser A."/>
            <person name="Friedli L."/>
            <person name="Gu Z."/>
            <person name="Guan P."/>
            <person name="Guigo R."/>
            <person name="Hillenmeyer M.E."/>
            <person name="Hladun S.L."/>
            <person name="Hogan J.R."/>
            <person name="Hong Y.S."/>
            <person name="Hoover J."/>
            <person name="Jaillon O."/>
            <person name="Ke Z."/>
            <person name="Kodira C.D."/>
            <person name="Kokoza E."/>
            <person name="Koutsos A."/>
            <person name="Letunic I."/>
            <person name="Levitsky A.A."/>
            <person name="Liang Y."/>
            <person name="Lin J.-J."/>
            <person name="Lobo N.F."/>
            <person name="Lopez J.R."/>
            <person name="Malek J.A."/>
            <person name="McIntosh T.C."/>
            <person name="Meister S."/>
            <person name="Miller J.R."/>
            <person name="Mobarry C."/>
            <person name="Mongin E."/>
            <person name="Murphy S.D."/>
            <person name="O'Brochta D.A."/>
            <person name="Pfannkoch C."/>
            <person name="Qi R."/>
            <person name="Regier M.A."/>
            <person name="Remington K."/>
            <person name="Shao H."/>
            <person name="Sharakhova M.V."/>
            <person name="Sitter C.D."/>
            <person name="Shetty J."/>
            <person name="Smith T.J."/>
            <person name="Strong R."/>
            <person name="Sun J."/>
            <person name="Thomasova D."/>
            <person name="Ton L.Q."/>
            <person name="Topalis P."/>
            <person name="Tu Z.J."/>
            <person name="Unger M.F."/>
            <person name="Walenz B."/>
            <person name="Wang A.H."/>
            <person name="Wang J."/>
            <person name="Wang M."/>
            <person name="Wang X."/>
            <person name="Woodford K.J."/>
            <person name="Wortman J.R."/>
            <person name="Wu M."/>
            <person name="Yao A."/>
            <person name="Zdobnov E.M."/>
            <person name="Zhang H."/>
            <person name="Zhao Q."/>
            <person name="Zhao S."/>
            <person name="Zhu S.C."/>
            <person name="Zhimulev I."/>
            <person name="Coluzzi M."/>
            <person name="della Torre A."/>
            <person name="Roth C.W."/>
            <person name="Louis C."/>
            <person name="Kalush F."/>
            <person name="Mural R.J."/>
            <person name="Myers E.W."/>
            <person name="Adams M.D."/>
            <person name="Smith H.O."/>
            <person name="Broder S."/>
            <person name="Gardner M.J."/>
            <person name="Fraser C.M."/>
            <person name="Birney E."/>
            <person name="Bork P."/>
            <person name="Brey P.T."/>
            <person name="Venter J.C."/>
            <person name="Weissenbach J."/>
            <person name="Kafatos F.C."/>
            <person name="Collins F.H."/>
            <person name="Hoffman S.L."/>
        </authorList>
    </citation>
    <scope>NUCLEOTIDE SEQUENCE [LARGE SCALE GENOMIC DNA]</scope>
    <source>
        <strain>PEST</strain>
    </source>
</reference>
<evidence type="ECO:0000250" key="1">
    <source>
        <dbReference type="UniProtKB" id="O75394"/>
    </source>
</evidence>
<evidence type="ECO:0000255" key="2"/>
<evidence type="ECO:0000305" key="3"/>
<organism>
    <name type="scientific">Anopheles gambiae</name>
    <name type="common">African malaria mosquito</name>
    <dbReference type="NCBI Taxonomy" id="7165"/>
    <lineage>
        <taxon>Eukaryota</taxon>
        <taxon>Metazoa</taxon>
        <taxon>Ecdysozoa</taxon>
        <taxon>Arthropoda</taxon>
        <taxon>Hexapoda</taxon>
        <taxon>Insecta</taxon>
        <taxon>Pterygota</taxon>
        <taxon>Neoptera</taxon>
        <taxon>Endopterygota</taxon>
        <taxon>Diptera</taxon>
        <taxon>Nematocera</taxon>
        <taxon>Culicoidea</taxon>
        <taxon>Culicidae</taxon>
        <taxon>Anophelinae</taxon>
        <taxon>Anopheles</taxon>
    </lineage>
</organism>
<keyword id="KW-0496">Mitochondrion</keyword>
<keyword id="KW-1185">Reference proteome</keyword>
<keyword id="KW-0687">Ribonucleoprotein</keyword>
<keyword id="KW-0689">Ribosomal protein</keyword>
<keyword id="KW-0809">Transit peptide</keyword>
<sequence length="65" mass="7828">MFITNILLKKAKSKNILVLMESAVSGHQFTMIRERLADKLELQRFDPYIQKMCLYRERKRLRSLN</sequence>
<proteinExistence type="inferred from homology"/>
<dbReference type="EMBL" id="AAAB01008987">
    <property type="protein sequence ID" value="EAA01661.2"/>
    <property type="molecule type" value="Genomic_DNA"/>
</dbReference>
<dbReference type="SMR" id="Q7PYH1"/>
<dbReference type="FunCoup" id="Q7PYH1">
    <property type="interactions" value="444"/>
</dbReference>
<dbReference type="STRING" id="7165.Q7PYH1"/>
<dbReference type="PaxDb" id="7165-AGAP001937-PA"/>
<dbReference type="EnsemblMetazoa" id="AGAP001937-RA">
    <property type="protein sequence ID" value="AGAP001937-PA"/>
    <property type="gene ID" value="AGAP001937"/>
</dbReference>
<dbReference type="GeneID" id="1281186"/>
<dbReference type="KEGG" id="aga:1281186"/>
<dbReference type="CTD" id="9553"/>
<dbReference type="VEuPathDB" id="VectorBase:AGAMI1_004816"/>
<dbReference type="VEuPathDB" id="VectorBase:AGAP001937"/>
<dbReference type="eggNOG" id="ENOG502S7RR">
    <property type="taxonomic scope" value="Eukaryota"/>
</dbReference>
<dbReference type="HOGENOM" id="CLU_190949_2_0_1"/>
<dbReference type="InParanoid" id="Q7PYH1"/>
<dbReference type="OMA" id="KSKFIMV"/>
<dbReference type="PhylomeDB" id="Q7PYH1"/>
<dbReference type="Proteomes" id="UP000007062">
    <property type="component" value="Chromosome 2R"/>
</dbReference>
<dbReference type="GO" id="GO:0005762">
    <property type="term" value="C:mitochondrial large ribosomal subunit"/>
    <property type="evidence" value="ECO:0000250"/>
    <property type="project" value="UniProtKB"/>
</dbReference>
<dbReference type="GO" id="GO:0005739">
    <property type="term" value="C:mitochondrion"/>
    <property type="evidence" value="ECO:0000318"/>
    <property type="project" value="GO_Central"/>
</dbReference>
<dbReference type="GO" id="GO:0003735">
    <property type="term" value="F:structural constituent of ribosome"/>
    <property type="evidence" value="ECO:0007669"/>
    <property type="project" value="InterPro"/>
</dbReference>
<dbReference type="GO" id="GO:0006412">
    <property type="term" value="P:translation"/>
    <property type="evidence" value="ECO:0007669"/>
    <property type="project" value="InterPro"/>
</dbReference>
<dbReference type="FunFam" id="2.20.28.120:FF:000005">
    <property type="entry name" value="39S ribosomal protein L33, mitochondrial"/>
    <property type="match status" value="1"/>
</dbReference>
<dbReference type="Gene3D" id="2.20.28.120">
    <property type="entry name" value="Ribosomal protein L33"/>
    <property type="match status" value="1"/>
</dbReference>
<dbReference type="InterPro" id="IPR052008">
    <property type="entry name" value="Mitoribosomal_protein_bL33"/>
</dbReference>
<dbReference type="InterPro" id="IPR001705">
    <property type="entry name" value="Ribosomal_bL33"/>
</dbReference>
<dbReference type="InterPro" id="IPR038584">
    <property type="entry name" value="Ribosomal_bL33_sf"/>
</dbReference>
<dbReference type="InterPro" id="IPR011332">
    <property type="entry name" value="Ribosomal_zn-bd"/>
</dbReference>
<dbReference type="NCBIfam" id="TIGR01023">
    <property type="entry name" value="rpmG_bact"/>
    <property type="match status" value="1"/>
</dbReference>
<dbReference type="PANTHER" id="PTHR47037">
    <property type="entry name" value="39S RIBOSOMAL PROTEIN L33, MITOCHONDRIAL"/>
    <property type="match status" value="1"/>
</dbReference>
<dbReference type="PANTHER" id="PTHR47037:SF1">
    <property type="entry name" value="LARGE RIBOSOMAL SUBUNIT PROTEIN BL33M"/>
    <property type="match status" value="1"/>
</dbReference>
<dbReference type="SUPFAM" id="SSF57829">
    <property type="entry name" value="Zn-binding ribosomal proteins"/>
    <property type="match status" value="1"/>
</dbReference>
<comment type="subunit">
    <text evidence="1">Component of the mitochondrial ribosome large subunit (39S) which comprises a 16S rRNA and about 50 distinct proteins.</text>
</comment>
<comment type="subcellular location">
    <subcellularLocation>
        <location evidence="1">Mitochondrion</location>
    </subcellularLocation>
</comment>
<comment type="similarity">
    <text evidence="3">Belongs to the bacterial ribosomal protein bL33 family.</text>
</comment>
<feature type="transit peptide" description="Mitochondrion" evidence="2">
    <location>
        <begin position="1"/>
        <end status="unknown"/>
    </location>
</feature>
<feature type="chain" id="PRO_0000238628" description="Large ribosomal subunit protein bL33m">
    <location>
        <begin status="unknown"/>
        <end position="65"/>
    </location>
</feature>
<protein>
    <recommendedName>
        <fullName evidence="3">Large ribosomal subunit protein bL33m</fullName>
    </recommendedName>
    <alternativeName>
        <fullName>39S ribosomal protein L33, mitochondrial</fullName>
        <shortName>L33mt</shortName>
        <shortName>MRP-L33</shortName>
    </alternativeName>
</protein>
<name>RM33_ANOGA</name>
<gene>
    <name type="primary">mRpL33</name>
    <name type="ORF">AGAP001937</name>
</gene>
<accession>Q7PYH1</accession>